<name>HIS1_TRIV2</name>
<proteinExistence type="inferred from homology"/>
<reference key="1">
    <citation type="journal article" date="2014" name="Stand. Genomic Sci.">
        <title>Complete genome sequence of Anabaena variabilis ATCC 29413.</title>
        <authorList>
            <person name="Thiel T."/>
            <person name="Pratte B.S."/>
            <person name="Zhong J."/>
            <person name="Goodwin L."/>
            <person name="Copeland A."/>
            <person name="Lucas S."/>
            <person name="Han C."/>
            <person name="Pitluck S."/>
            <person name="Land M.L."/>
            <person name="Kyrpides N.C."/>
            <person name="Woyke T."/>
        </authorList>
    </citation>
    <scope>NUCLEOTIDE SEQUENCE [LARGE SCALE GENOMIC DNA]</scope>
    <source>
        <strain>ATCC 29413 / PCC 7937</strain>
    </source>
</reference>
<accession>Q3M4Z2</accession>
<sequence>MLTVALPKGELLKNSIRLLKSVGLDFSAFLDSGNRQLQITDASGRAKGLLVRGQDVPVYVEYGQAQIGIIGYDVLREKQPQVAHLVDLQFGYCRMSVAVKASSPYKSPLDLPAHSRVASKYVNSAREFFQGLDLPVEIVPLYGSVELGPITGMSEAIVDIVSTGRTLKENGLVEITTLYESTARLIAHPLSYRLNTGNLHQLVEQLREGVLSELPILT</sequence>
<evidence type="ECO:0000255" key="1">
    <source>
        <dbReference type="HAMAP-Rule" id="MF_01018"/>
    </source>
</evidence>
<comment type="function">
    <text evidence="1">Catalyzes the condensation of ATP and 5-phosphoribose 1-diphosphate to form N'-(5'-phosphoribosyl)-ATP (PR-ATP). Has a crucial role in the pathway because the rate of histidine biosynthesis seems to be controlled primarily by regulation of HisG enzymatic activity.</text>
</comment>
<comment type="catalytic activity">
    <reaction evidence="1">
        <text>1-(5-phospho-beta-D-ribosyl)-ATP + diphosphate = 5-phospho-alpha-D-ribose 1-diphosphate + ATP</text>
        <dbReference type="Rhea" id="RHEA:18473"/>
        <dbReference type="ChEBI" id="CHEBI:30616"/>
        <dbReference type="ChEBI" id="CHEBI:33019"/>
        <dbReference type="ChEBI" id="CHEBI:58017"/>
        <dbReference type="ChEBI" id="CHEBI:73183"/>
        <dbReference type="EC" id="2.4.2.17"/>
    </reaction>
</comment>
<comment type="pathway">
    <text evidence="1">Amino-acid biosynthesis; L-histidine biosynthesis; L-histidine from 5-phospho-alpha-D-ribose 1-diphosphate: step 1/9.</text>
</comment>
<comment type="subunit">
    <text evidence="1">Heteromultimer composed of HisG and HisZ subunits.</text>
</comment>
<comment type="subcellular location">
    <subcellularLocation>
        <location evidence="1">Cytoplasm</location>
    </subcellularLocation>
</comment>
<comment type="domain">
    <text>Lacks the C-terminal regulatory region which is replaced by HisZ.</text>
</comment>
<comment type="similarity">
    <text evidence="1">Belongs to the ATP phosphoribosyltransferase family. Short subfamily.</text>
</comment>
<gene>
    <name evidence="1" type="primary">hisG</name>
    <name type="ordered locus">Ava_4346</name>
</gene>
<keyword id="KW-0028">Amino-acid biosynthesis</keyword>
<keyword id="KW-0067">ATP-binding</keyword>
<keyword id="KW-0963">Cytoplasm</keyword>
<keyword id="KW-0328">Glycosyltransferase</keyword>
<keyword id="KW-0368">Histidine biosynthesis</keyword>
<keyword id="KW-0547">Nucleotide-binding</keyword>
<keyword id="KW-0808">Transferase</keyword>
<dbReference type="EC" id="2.4.2.17" evidence="1"/>
<dbReference type="EMBL" id="CP000117">
    <property type="protein sequence ID" value="ABA23944.1"/>
    <property type="molecule type" value="Genomic_DNA"/>
</dbReference>
<dbReference type="SMR" id="Q3M4Z2"/>
<dbReference type="STRING" id="240292.Ava_4346"/>
<dbReference type="KEGG" id="ava:Ava_4346"/>
<dbReference type="eggNOG" id="COG0040">
    <property type="taxonomic scope" value="Bacteria"/>
</dbReference>
<dbReference type="HOGENOM" id="CLU_038115_2_0_3"/>
<dbReference type="UniPathway" id="UPA00031">
    <property type="reaction ID" value="UER00006"/>
</dbReference>
<dbReference type="Proteomes" id="UP000002533">
    <property type="component" value="Chromosome"/>
</dbReference>
<dbReference type="GO" id="GO:0005737">
    <property type="term" value="C:cytoplasm"/>
    <property type="evidence" value="ECO:0007669"/>
    <property type="project" value="UniProtKB-SubCell"/>
</dbReference>
<dbReference type="GO" id="GO:0005524">
    <property type="term" value="F:ATP binding"/>
    <property type="evidence" value="ECO:0007669"/>
    <property type="project" value="UniProtKB-KW"/>
</dbReference>
<dbReference type="GO" id="GO:0003879">
    <property type="term" value="F:ATP phosphoribosyltransferase activity"/>
    <property type="evidence" value="ECO:0007669"/>
    <property type="project" value="UniProtKB-UniRule"/>
</dbReference>
<dbReference type="GO" id="GO:0000105">
    <property type="term" value="P:L-histidine biosynthetic process"/>
    <property type="evidence" value="ECO:0007669"/>
    <property type="project" value="UniProtKB-UniRule"/>
</dbReference>
<dbReference type="CDD" id="cd13595">
    <property type="entry name" value="PBP2_HisGs"/>
    <property type="match status" value="1"/>
</dbReference>
<dbReference type="FunFam" id="3.40.190.10:FF:000008">
    <property type="entry name" value="ATP phosphoribosyltransferase"/>
    <property type="match status" value="1"/>
</dbReference>
<dbReference type="Gene3D" id="3.40.190.10">
    <property type="entry name" value="Periplasmic binding protein-like II"/>
    <property type="match status" value="2"/>
</dbReference>
<dbReference type="HAMAP" id="MF_01018">
    <property type="entry name" value="HisG_Short"/>
    <property type="match status" value="1"/>
</dbReference>
<dbReference type="InterPro" id="IPR013820">
    <property type="entry name" value="ATP_PRibTrfase_cat"/>
</dbReference>
<dbReference type="InterPro" id="IPR018198">
    <property type="entry name" value="ATP_PRibTrfase_CS"/>
</dbReference>
<dbReference type="InterPro" id="IPR001348">
    <property type="entry name" value="ATP_PRibTrfase_HisG"/>
</dbReference>
<dbReference type="InterPro" id="IPR024893">
    <property type="entry name" value="ATP_PRibTrfase_HisG_short"/>
</dbReference>
<dbReference type="NCBIfam" id="TIGR00070">
    <property type="entry name" value="hisG"/>
    <property type="match status" value="1"/>
</dbReference>
<dbReference type="PANTHER" id="PTHR21403:SF8">
    <property type="entry name" value="ATP PHOSPHORIBOSYLTRANSFERASE"/>
    <property type="match status" value="1"/>
</dbReference>
<dbReference type="PANTHER" id="PTHR21403">
    <property type="entry name" value="ATP PHOSPHORIBOSYLTRANSFERASE ATP-PRTASE"/>
    <property type="match status" value="1"/>
</dbReference>
<dbReference type="Pfam" id="PF01634">
    <property type="entry name" value="HisG"/>
    <property type="match status" value="1"/>
</dbReference>
<dbReference type="SUPFAM" id="SSF53850">
    <property type="entry name" value="Periplasmic binding protein-like II"/>
    <property type="match status" value="1"/>
</dbReference>
<dbReference type="PROSITE" id="PS01316">
    <property type="entry name" value="ATP_P_PHORIBOSYLTR"/>
    <property type="match status" value="1"/>
</dbReference>
<protein>
    <recommendedName>
        <fullName evidence="1">ATP phosphoribosyltransferase</fullName>
        <shortName evidence="1">ATP-PRT</shortName>
        <shortName evidence="1">ATP-PRTase</shortName>
        <ecNumber evidence="1">2.4.2.17</ecNumber>
    </recommendedName>
</protein>
<organism>
    <name type="scientific">Trichormus variabilis (strain ATCC 29413 / PCC 7937)</name>
    <name type="common">Anabaena variabilis</name>
    <dbReference type="NCBI Taxonomy" id="240292"/>
    <lineage>
        <taxon>Bacteria</taxon>
        <taxon>Bacillati</taxon>
        <taxon>Cyanobacteriota</taxon>
        <taxon>Cyanophyceae</taxon>
        <taxon>Nostocales</taxon>
        <taxon>Nostocaceae</taxon>
        <taxon>Trichormus</taxon>
    </lineage>
</organism>
<feature type="chain" id="PRO_0000229301" description="ATP phosphoribosyltransferase">
    <location>
        <begin position="1"/>
        <end position="218"/>
    </location>
</feature>